<name>COGS_HYPLI</name>
<protein>
    <recommendedName>
        <fullName>Collagenase</fullName>
        <ecNumber>3.4.21.49</ecNumber>
    </recommendedName>
    <alternativeName>
        <fullName>Hypodermin C</fullName>
        <shortName>HC</shortName>
    </alternativeName>
</protein>
<dbReference type="EC" id="3.4.21.49"/>
<dbReference type="EMBL" id="X74306">
    <property type="protein sequence ID" value="CAA52359.1"/>
    <property type="molecule type" value="mRNA"/>
</dbReference>
<dbReference type="EMBL" id="AB054066">
    <property type="protein sequence ID" value="BAB20995.1"/>
    <property type="molecule type" value="mRNA"/>
</dbReference>
<dbReference type="PIR" id="A27802">
    <property type="entry name" value="A27802"/>
</dbReference>
<dbReference type="PDB" id="1HYL">
    <property type="method" value="X-ray"/>
    <property type="resolution" value="1.80 A"/>
    <property type="chains" value="A/B=31-258"/>
</dbReference>
<dbReference type="PDB" id="2HLC">
    <property type="method" value="X-ray"/>
    <property type="resolution" value="1.70 A"/>
    <property type="chains" value="A/B=31-258"/>
</dbReference>
<dbReference type="PDBsum" id="1HYL"/>
<dbReference type="PDBsum" id="2HLC"/>
<dbReference type="SMR" id="P08897"/>
<dbReference type="MEROPS" id="S01.121"/>
<dbReference type="KEGG" id="ag:CAA52359"/>
<dbReference type="BRENDA" id="3.4.21.49">
    <property type="organism ID" value="2751"/>
</dbReference>
<dbReference type="EvolutionaryTrace" id="P08897"/>
<dbReference type="GO" id="GO:0005576">
    <property type="term" value="C:extracellular region"/>
    <property type="evidence" value="ECO:0007669"/>
    <property type="project" value="UniProtKB-SubCell"/>
</dbReference>
<dbReference type="GO" id="GO:0004252">
    <property type="term" value="F:serine-type endopeptidase activity"/>
    <property type="evidence" value="ECO:0007669"/>
    <property type="project" value="InterPro"/>
</dbReference>
<dbReference type="GO" id="GO:0030574">
    <property type="term" value="P:collagen catabolic process"/>
    <property type="evidence" value="ECO:0007669"/>
    <property type="project" value="UniProtKB-KW"/>
</dbReference>
<dbReference type="GO" id="GO:0006508">
    <property type="term" value="P:proteolysis"/>
    <property type="evidence" value="ECO:0007669"/>
    <property type="project" value="UniProtKB-KW"/>
</dbReference>
<dbReference type="CDD" id="cd00190">
    <property type="entry name" value="Tryp_SPc"/>
    <property type="match status" value="1"/>
</dbReference>
<dbReference type="FunFam" id="2.40.10.10:FF:000025">
    <property type="entry name" value="serine proteases 1/2"/>
    <property type="match status" value="1"/>
</dbReference>
<dbReference type="FunFam" id="2.40.10.10:FF:000073">
    <property type="entry name" value="Trypsin alpha"/>
    <property type="match status" value="1"/>
</dbReference>
<dbReference type="Gene3D" id="2.40.10.10">
    <property type="entry name" value="Trypsin-like serine proteases"/>
    <property type="match status" value="2"/>
</dbReference>
<dbReference type="InterPro" id="IPR050430">
    <property type="entry name" value="Peptidase_S1"/>
</dbReference>
<dbReference type="InterPro" id="IPR009003">
    <property type="entry name" value="Peptidase_S1_PA"/>
</dbReference>
<dbReference type="InterPro" id="IPR043504">
    <property type="entry name" value="Peptidase_S1_PA_chymotrypsin"/>
</dbReference>
<dbReference type="InterPro" id="IPR001314">
    <property type="entry name" value="Peptidase_S1A"/>
</dbReference>
<dbReference type="InterPro" id="IPR001254">
    <property type="entry name" value="Trypsin_dom"/>
</dbReference>
<dbReference type="InterPro" id="IPR018114">
    <property type="entry name" value="TRYPSIN_HIS"/>
</dbReference>
<dbReference type="InterPro" id="IPR033116">
    <property type="entry name" value="TRYPSIN_SER"/>
</dbReference>
<dbReference type="PANTHER" id="PTHR24276:SF91">
    <property type="entry name" value="AT26814P-RELATED"/>
    <property type="match status" value="1"/>
</dbReference>
<dbReference type="PANTHER" id="PTHR24276">
    <property type="entry name" value="POLYSERASE-RELATED"/>
    <property type="match status" value="1"/>
</dbReference>
<dbReference type="Pfam" id="PF00089">
    <property type="entry name" value="Trypsin"/>
    <property type="match status" value="1"/>
</dbReference>
<dbReference type="PRINTS" id="PR00722">
    <property type="entry name" value="CHYMOTRYPSIN"/>
</dbReference>
<dbReference type="SMART" id="SM00020">
    <property type="entry name" value="Tryp_SPc"/>
    <property type="match status" value="1"/>
</dbReference>
<dbReference type="SUPFAM" id="SSF50494">
    <property type="entry name" value="Trypsin-like serine proteases"/>
    <property type="match status" value="1"/>
</dbReference>
<dbReference type="PROSITE" id="PS50240">
    <property type="entry name" value="TRYPSIN_DOM"/>
    <property type="match status" value="1"/>
</dbReference>
<dbReference type="PROSITE" id="PS00134">
    <property type="entry name" value="TRYPSIN_HIS"/>
    <property type="match status" value="1"/>
</dbReference>
<dbReference type="PROSITE" id="PS00135">
    <property type="entry name" value="TRYPSIN_SER"/>
    <property type="match status" value="1"/>
</dbReference>
<evidence type="ECO:0000255" key="1"/>
<evidence type="ECO:0000255" key="2">
    <source>
        <dbReference type="PROSITE-ProRule" id="PRU00274"/>
    </source>
</evidence>
<evidence type="ECO:0000269" key="3">
    <source>
    </source>
</evidence>
<evidence type="ECO:0000269" key="4">
    <source>
    </source>
</evidence>
<evidence type="ECO:0000269" key="5">
    <source>
    </source>
</evidence>
<evidence type="ECO:0000269" key="6">
    <source>
    </source>
</evidence>
<evidence type="ECO:0000305" key="7"/>
<evidence type="ECO:0007829" key="8">
    <source>
        <dbReference type="PDB" id="2HLC"/>
    </source>
</evidence>
<keyword id="KW-0002">3D-structure</keyword>
<keyword id="KW-0177">Collagen degradation</keyword>
<keyword id="KW-0903">Direct protein sequencing</keyword>
<keyword id="KW-1015">Disulfide bond</keyword>
<keyword id="KW-0378">Hydrolase</keyword>
<keyword id="KW-0645">Protease</keyword>
<keyword id="KW-0964">Secreted</keyword>
<keyword id="KW-0720">Serine protease</keyword>
<keyword id="KW-0732">Signal</keyword>
<keyword id="KW-0865">Zymogen</keyword>
<proteinExistence type="evidence at protein level"/>
<organism>
    <name type="scientific">Hypoderma lineatum</name>
    <name type="common">Early cattle grub</name>
    <name type="synonym">Common cattle grub</name>
    <dbReference type="NCBI Taxonomy" id="7389"/>
    <lineage>
        <taxon>Eukaryota</taxon>
        <taxon>Metazoa</taxon>
        <taxon>Ecdysozoa</taxon>
        <taxon>Arthropoda</taxon>
        <taxon>Hexapoda</taxon>
        <taxon>Insecta</taxon>
        <taxon>Pterygota</taxon>
        <taxon>Neoptera</taxon>
        <taxon>Endopterygota</taxon>
        <taxon>Diptera</taxon>
        <taxon>Brachycera</taxon>
        <taxon>Muscomorpha</taxon>
        <taxon>Oestroidea</taxon>
        <taxon>Oestridae</taxon>
        <taxon>Hypodermatinae</taxon>
        <taxon>Hypoderma</taxon>
    </lineage>
</organism>
<feature type="signal peptide" evidence="1">
    <location>
        <begin position="1"/>
        <end position="16"/>
    </location>
</feature>
<feature type="propeptide" id="PRO_0000027622" evidence="5 6">
    <location>
        <begin position="17"/>
        <end position="30"/>
    </location>
</feature>
<feature type="chain" id="PRO_0000027623" description="Collagenase">
    <location>
        <begin position="31"/>
        <end position="260"/>
    </location>
</feature>
<feature type="domain" description="Peptidase S1" evidence="2">
    <location>
        <begin position="31"/>
        <end position="257"/>
    </location>
</feature>
<feature type="active site" description="Charge relay system">
    <location>
        <position position="75"/>
    </location>
</feature>
<feature type="active site" description="Charge relay system">
    <location>
        <position position="118"/>
    </location>
</feature>
<feature type="active site" description="Charge relay system">
    <location>
        <position position="210"/>
    </location>
</feature>
<feature type="disulfide bond">
    <location>
        <begin position="60"/>
        <end position="76"/>
    </location>
</feature>
<feature type="disulfide bond">
    <location>
        <begin position="181"/>
        <end position="196"/>
    </location>
</feature>
<feature type="disulfide bond">
    <location>
        <begin position="206"/>
        <end position="234"/>
    </location>
</feature>
<feature type="sequence conflict" description="In Ref. 4; AA sequence." evidence="7" ref="4">
    <original>D</original>
    <variation>E</variation>
    <location>
        <position position="54"/>
    </location>
</feature>
<feature type="sequence conflict" description="In Ref. 4; AA sequence." evidence="7" ref="4">
    <original>RR</original>
    <variation>QD</variation>
    <location>
        <begin position="56"/>
        <end position="57"/>
    </location>
</feature>
<feature type="sequence conflict" description="In Ref. 2; BAB20995 and 3; AA sequence." evidence="7" ref="2 3">
    <original>C</original>
    <variation>S</variation>
    <location>
        <position position="200"/>
    </location>
</feature>
<feature type="sequence conflict" description="In Ref. 5; AA sequence." evidence="7" ref="5">
    <original>VL</original>
    <variation>SK</variation>
    <location>
        <begin position="215"/>
        <end position="216"/>
    </location>
</feature>
<feature type="sequence conflict" description="In Ref. 3; AA sequence." evidence="7" ref="3">
    <original>I</original>
    <variation>K</variation>
    <location>
        <position position="259"/>
    </location>
</feature>
<feature type="strand" evidence="8">
    <location>
        <begin position="45"/>
        <end position="52"/>
    </location>
</feature>
<feature type="strand" evidence="8">
    <location>
        <begin position="57"/>
        <end position="66"/>
    </location>
</feature>
<feature type="strand" evidence="8">
    <location>
        <begin position="69"/>
        <end position="72"/>
    </location>
</feature>
<feature type="helix" evidence="8">
    <location>
        <begin position="74"/>
        <end position="77"/>
    </location>
</feature>
<feature type="strand" evidence="8">
    <location>
        <begin position="80"/>
        <end position="88"/>
    </location>
</feature>
<feature type="strand" evidence="8">
    <location>
        <begin position="96"/>
        <end position="100"/>
    </location>
</feature>
<feature type="strand" evidence="8">
    <location>
        <begin position="102"/>
        <end position="106"/>
    </location>
</feature>
<feature type="turn" evidence="8">
    <location>
        <begin position="112"/>
        <end position="115"/>
    </location>
</feature>
<feature type="strand" evidence="8">
    <location>
        <begin position="120"/>
        <end position="123"/>
    </location>
</feature>
<feature type="helix" evidence="8">
    <location>
        <begin position="141"/>
        <end position="145"/>
    </location>
</feature>
<feature type="strand" evidence="8">
    <location>
        <begin position="152"/>
        <end position="159"/>
    </location>
</feature>
<feature type="strand" evidence="8">
    <location>
        <begin position="169"/>
        <end position="176"/>
    </location>
</feature>
<feature type="helix" evidence="8">
    <location>
        <begin position="178"/>
        <end position="182"/>
    </location>
</feature>
<feature type="strand" evidence="8">
    <location>
        <begin position="194"/>
        <end position="197"/>
    </location>
</feature>
<feature type="strand" evidence="8">
    <location>
        <begin position="213"/>
        <end position="216"/>
    </location>
</feature>
<feature type="turn" evidence="8">
    <location>
        <begin position="217"/>
        <end position="220"/>
    </location>
</feature>
<feature type="strand" evidence="8">
    <location>
        <begin position="221"/>
        <end position="228"/>
    </location>
</feature>
<feature type="strand" evidence="8">
    <location>
        <begin position="240"/>
        <end position="244"/>
    </location>
</feature>
<feature type="helix" evidence="8">
    <location>
        <begin position="245"/>
        <end position="248"/>
    </location>
</feature>
<feature type="helix" evidence="8">
    <location>
        <begin position="249"/>
        <end position="256"/>
    </location>
</feature>
<comment type="function">
    <text evidence="3 4">This enzyme is a serine protease capable of degrading the native triple helix of collagen. Also cleaves the B chain of insulin at the 15-Leu-|-Try-16 and 22-Arg-|-Gly-23 bonds. Hydrolyzes casein, but not Px-Pro-Leu-Gly-Pro-DArg, BzArgNHPh, AcTyrNHPh, 2-naphthyl phosphate, 2-naphthyl butyrate, 2-naphthyl caprylate, 2-naphthyl myristate, L-leucine 2-2-naphthylamide, L-valine 2-naphthylamide, L-cysteine 2-naphthylamide or L-glutarylphenylalanine 2-naphthylamide.</text>
</comment>
<comment type="catalytic activity">
    <reaction evidence="3 4">
        <text>Hydrolysis of proteins including native collagen at Xaa-|-Ala bond leaving an N-terminal (75%) and a C-terminal (25%) fragment.</text>
        <dbReference type="EC" id="3.4.21.49"/>
    </reaction>
</comment>
<comment type="activity regulation">
    <text evidence="3">Inhibited by diisopropylfluorophosphate.</text>
</comment>
<comment type="biophysicochemical properties">
    <phDependence>
        <text evidence="4">Optimum pH is 8.0-8.5. Reversibly inactivated below pH 4.5.</text>
    </phDependence>
    <temperatureDependence>
        <text evidence="4">Thermostable. No loss of activity occurs after incubation for 2 hours at 60 degrees Celsius. Inactivated after incubation for 2 hours at 75 degrees Celsius, however 45% of activity remains after incubation for 20 minutes at 75 degrees Celsius.</text>
    </temperatureDependence>
</comment>
<comment type="subcellular location">
    <subcellularLocation>
        <location>Secreted</location>
    </subcellularLocation>
</comment>
<comment type="developmental stage">
    <text>Larval-specific.</text>
</comment>
<comment type="similarity">
    <text evidence="2">Belongs to the peptidase S1 family.</text>
</comment>
<accession>P08897</accession>
<accession>Q25083</accession>
<accession>Q9BPQ4</accession>
<sequence>MKFLLVFALALATTSAFQHPASIFELREGRIINGYEAYTGLFPYQAGLDITLQDQRRVWCGGSLIDNKWILTAAHCVHDAVSVVVYLGSAVQYEGEAVVNSERIISHSMFNPDTYLNDVALIKIPHVEYTDNIQPIRLPSGEELNNKFENIWATVSGWGQSNTDTVILQYTYNLVIDNDRCAQEYPPGIIVESTICGDTCDGKSPCFGDSGGPFVLSDKNLLIGVVSFVSGAGCESGKPVGFSRVTSYMDWIQQNTGIIF</sequence>
<reference key="1">
    <citation type="journal article" date="1994" name="Mol. Biochem. Parasitol.">
        <title>Sequencing and gene expression of hypodermins A, B, C in larval stages of Hypoderma lineatum.</title>
        <authorList>
            <person name="Moire N."/>
            <person name="Bigot Y."/>
            <person name="Periquet G."/>
            <person name="Boulard C."/>
        </authorList>
    </citation>
    <scope>NUCLEOTIDE SEQUENCE [MRNA]</scope>
</reference>
<reference key="2">
    <citation type="journal article" date="2001" name="Vet. Parasitol.">
        <title>Detection of antibodies to Hypoderma lineatum in cattle by Western blotting with recombinant hypodermin C antigen.</title>
        <authorList>
            <person name="Boldbaatar D."/>
            <person name="Xuan X."/>
            <person name="Kimbita E."/>
            <person name="Huang X."/>
            <person name="Igarashi I."/>
            <person name="Byambaa B."/>
            <person name="Battsetseg B."/>
            <person name="Battur B."/>
            <person name="Battsetseg G."/>
            <person name="Batsukh Z."/>
            <person name="Nagasawa H."/>
            <person name="Fujisaki K."/>
            <person name="Mikami T."/>
        </authorList>
    </citation>
    <scope>NUCLEOTIDE SEQUENCE [MRNA]</scope>
</reference>
<reference key="3">
    <citation type="journal article" date="1987" name="J. Biol. Chem.">
        <title>Complete amino acid sequence of the collagenase from the insect Hypoderma lineatum.</title>
        <authorList>
            <person name="Lecroisey A."/>
            <person name="Gilles A.-M."/>
            <person name="de Wolf A."/>
            <person name="Keil B."/>
        </authorList>
    </citation>
    <scope>PROTEIN SEQUENCE OF 31-260</scope>
</reference>
<reference key="4">
    <citation type="journal article" date="1980" name="Biochem. Biophys. Res. Commun.">
        <title>Sequential homology of the collagenase from eucaryote Hypoderma lineatum with the proteinases of the trypsin family.</title>
        <authorList>
            <person name="Lecroisey A."/>
            <person name="De Wolf A."/>
            <person name="Keil B."/>
        </authorList>
    </citation>
    <scope>PROTEIN SEQUENCE OF 31-62</scope>
    <source>
        <tissue>Larva</tissue>
    </source>
</reference>
<reference key="5">
    <citation type="journal article" date="1983" name="Biochem. Biophys. Res. Commun.">
        <title>Structural study on the active site of the collagenase from Hypoderma lineatum.</title>
        <authorList>
            <person name="Lecroisey A."/>
            <person name="Keil B."/>
        </authorList>
    </citation>
    <scope>PROTEIN SEQUENCE OF 204-216</scope>
    <source>
        <tissue>Larva</tissue>
    </source>
</reference>
<reference key="6">
    <citation type="journal article" date="1979" name="Eur. J. Biochem.">
        <title>Chemical and enzymatic characterization of the collagenase from the insect Hypoderma lineatum.</title>
        <authorList>
            <person name="Lecroisey A."/>
            <person name="Boulard C."/>
            <person name="Keil B."/>
        </authorList>
    </citation>
    <scope>FUNCTION</scope>
    <scope>CATALYTIC ACTIVITY</scope>
    <scope>ACTIVITY REGULATION</scope>
</reference>
<reference key="7">
    <citation type="journal article" date="1985" name="Eur. J. Biochem.">
        <title>Specificity of the collagenase from the insect Hypoderma lineatum.</title>
        <authorList>
            <person name="Lecroisey A."/>
            <person name="Keil B."/>
        </authorList>
    </citation>
    <scope>FUNCTION</scope>
    <scope>CATALYTIC ACTIVITY</scope>
    <scope>BIOPHYSICOCHEMICAL PROPERTIES</scope>
</reference>
<reference key="8">
    <citation type="journal article" date="1996" name="Acta Crystallogr. D">
        <title>1.8-A structure of Hypoderma lineatum collagenase: a member of the serine proteinase family.</title>
        <authorList>
            <person name="Broutin I."/>
            <person name="Arnoux B."/>
            <person name="Riche C."/>
            <person name="Lecroisey A."/>
            <person name="Keil B."/>
            <person name="Pascard C."/>
            <person name="Ducruix A."/>
        </authorList>
    </citation>
    <scope>X-RAY CRYSTALLOGRAPHY (1.8 ANGSTROMS)</scope>
    <scope>SEQUENCE REVISION TO 167-168</scope>
</reference>